<proteinExistence type="inferred from homology"/>
<comment type="catalytic activity">
    <reaction evidence="1">
        <text>L-cysteine + L-glutamate + ATP = gamma-L-glutamyl-L-cysteine + ADP + phosphate + H(+)</text>
        <dbReference type="Rhea" id="RHEA:13285"/>
        <dbReference type="ChEBI" id="CHEBI:15378"/>
        <dbReference type="ChEBI" id="CHEBI:29985"/>
        <dbReference type="ChEBI" id="CHEBI:30616"/>
        <dbReference type="ChEBI" id="CHEBI:35235"/>
        <dbReference type="ChEBI" id="CHEBI:43474"/>
        <dbReference type="ChEBI" id="CHEBI:58173"/>
        <dbReference type="ChEBI" id="CHEBI:456216"/>
        <dbReference type="EC" id="6.3.2.2"/>
    </reaction>
</comment>
<comment type="pathway">
    <text evidence="1">Sulfur metabolism; glutathione biosynthesis; glutathione from L-cysteine and L-glutamate: step 1/2.</text>
</comment>
<comment type="similarity">
    <text evidence="1">Belongs to the glutamate--cysteine ligase type 1 family. Type 1 subfamily.</text>
</comment>
<name>GSH1_SHIF8</name>
<dbReference type="EC" id="6.3.2.2" evidence="1"/>
<dbReference type="EMBL" id="CP000266">
    <property type="protein sequence ID" value="ABF04896.1"/>
    <property type="molecule type" value="Genomic_DNA"/>
</dbReference>
<dbReference type="RefSeq" id="WP_000611802.1">
    <property type="nucleotide sequence ID" value="NC_008258.1"/>
</dbReference>
<dbReference type="SMR" id="Q0T1B9"/>
<dbReference type="GeneID" id="75205930"/>
<dbReference type="KEGG" id="sfv:SFV_2816"/>
<dbReference type="HOGENOM" id="CLU_020728_3_0_6"/>
<dbReference type="UniPathway" id="UPA00142">
    <property type="reaction ID" value="UER00209"/>
</dbReference>
<dbReference type="Proteomes" id="UP000000659">
    <property type="component" value="Chromosome"/>
</dbReference>
<dbReference type="GO" id="GO:0005829">
    <property type="term" value="C:cytosol"/>
    <property type="evidence" value="ECO:0007669"/>
    <property type="project" value="TreeGrafter"/>
</dbReference>
<dbReference type="GO" id="GO:0005524">
    <property type="term" value="F:ATP binding"/>
    <property type="evidence" value="ECO:0007669"/>
    <property type="project" value="UniProtKB-KW"/>
</dbReference>
<dbReference type="GO" id="GO:0004357">
    <property type="term" value="F:glutamate-cysteine ligase activity"/>
    <property type="evidence" value="ECO:0007669"/>
    <property type="project" value="UniProtKB-UniRule"/>
</dbReference>
<dbReference type="GO" id="GO:0046872">
    <property type="term" value="F:metal ion binding"/>
    <property type="evidence" value="ECO:0007669"/>
    <property type="project" value="TreeGrafter"/>
</dbReference>
<dbReference type="GO" id="GO:0006750">
    <property type="term" value="P:glutathione biosynthetic process"/>
    <property type="evidence" value="ECO:0007669"/>
    <property type="project" value="UniProtKB-UniRule"/>
</dbReference>
<dbReference type="FunFam" id="3.30.590.20:FF:000001">
    <property type="entry name" value="Glutamate--cysteine ligase"/>
    <property type="match status" value="1"/>
</dbReference>
<dbReference type="Gene3D" id="3.30.590.20">
    <property type="match status" value="1"/>
</dbReference>
<dbReference type="HAMAP" id="MF_00578">
    <property type="entry name" value="Glu_cys_ligase"/>
    <property type="match status" value="1"/>
</dbReference>
<dbReference type="InterPro" id="IPR014746">
    <property type="entry name" value="Gln_synth/guanido_kin_cat_dom"/>
</dbReference>
<dbReference type="InterPro" id="IPR007370">
    <property type="entry name" value="Glu_cys_ligase"/>
</dbReference>
<dbReference type="InterPro" id="IPR006334">
    <property type="entry name" value="Glut_cys_ligase"/>
</dbReference>
<dbReference type="NCBIfam" id="TIGR01434">
    <property type="entry name" value="glu_cys_ligase"/>
    <property type="match status" value="1"/>
</dbReference>
<dbReference type="PANTHER" id="PTHR38761">
    <property type="entry name" value="GLUTAMATE--CYSTEINE LIGASE"/>
    <property type="match status" value="1"/>
</dbReference>
<dbReference type="PANTHER" id="PTHR38761:SF1">
    <property type="entry name" value="GLUTAMATE--CYSTEINE LIGASE"/>
    <property type="match status" value="1"/>
</dbReference>
<dbReference type="Pfam" id="PF04262">
    <property type="entry name" value="Glu_cys_ligase"/>
    <property type="match status" value="1"/>
</dbReference>
<dbReference type="SUPFAM" id="SSF55931">
    <property type="entry name" value="Glutamine synthetase/guanido kinase"/>
    <property type="match status" value="1"/>
</dbReference>
<keyword id="KW-0067">ATP-binding</keyword>
<keyword id="KW-0317">Glutathione biosynthesis</keyword>
<keyword id="KW-0436">Ligase</keyword>
<keyword id="KW-0547">Nucleotide-binding</keyword>
<organism>
    <name type="scientific">Shigella flexneri serotype 5b (strain 8401)</name>
    <dbReference type="NCBI Taxonomy" id="373384"/>
    <lineage>
        <taxon>Bacteria</taxon>
        <taxon>Pseudomonadati</taxon>
        <taxon>Pseudomonadota</taxon>
        <taxon>Gammaproteobacteria</taxon>
        <taxon>Enterobacterales</taxon>
        <taxon>Enterobacteriaceae</taxon>
        <taxon>Shigella</taxon>
    </lineage>
</organism>
<protein>
    <recommendedName>
        <fullName evidence="1">Glutamate--cysteine ligase</fullName>
        <ecNumber evidence="1">6.3.2.2</ecNumber>
    </recommendedName>
    <alternativeName>
        <fullName evidence="1">Gamma-ECS</fullName>
        <shortName evidence="1">GCS</shortName>
    </alternativeName>
    <alternativeName>
        <fullName evidence="1">Gamma-glutamylcysteine synthetase</fullName>
    </alternativeName>
</protein>
<sequence length="518" mass="58315">MIPDVSQALAWLEKHPQALKGIQRGLERETLRVNADGTLATTGHPEALGSALTHKWITTDFAEALLEFITPVDGDIEHMLTFMRDLHRYTARNMGDERMWPLSMPCYIAEGQDIELAQYGTSNTGRFKTLYREGLKNRYGALMQTISGVHYNFSLPMAFWQAKCGDISGADAKEKISAGYFRVIRNYYRFGWVIPYLFGASPAICSSFLQGKPTSLPFEKTECGMYYLPYATSLRLSDLGYTNKSQSNLGITFNDLYEYVAGLKQAIKTPSEEYAKIGIEKDGKRLQINSNVLQIENELYAPIRPKRVTRSGESPSDALLRGGIEYIEVRSLDINPFSPIGVDEQQVRFLDLFMVWCALADAPEMSSSELACTRVNWNRVILEGRKPGLTLGIGCETAQFPLLQVGKDLFRDLKRVAQTLDSINGGEAYQKVCDELVACFDNPDLTFSARILRSMIDTGIGGTGKAFAEAYRNLLREEPLEILREEDFVAEREASERRQQEMETADTEPFAVWLEKHA</sequence>
<accession>Q0T1B9</accession>
<feature type="chain" id="PRO_1000025189" description="Glutamate--cysteine ligase">
    <location>
        <begin position="1"/>
        <end position="518"/>
    </location>
</feature>
<reference key="1">
    <citation type="journal article" date="2006" name="BMC Genomics">
        <title>Complete genome sequence of Shigella flexneri 5b and comparison with Shigella flexneri 2a.</title>
        <authorList>
            <person name="Nie H."/>
            <person name="Yang F."/>
            <person name="Zhang X."/>
            <person name="Yang J."/>
            <person name="Chen L."/>
            <person name="Wang J."/>
            <person name="Xiong Z."/>
            <person name="Peng J."/>
            <person name="Sun L."/>
            <person name="Dong J."/>
            <person name="Xue Y."/>
            <person name="Xu X."/>
            <person name="Chen S."/>
            <person name="Yao Z."/>
            <person name="Shen Y."/>
            <person name="Jin Q."/>
        </authorList>
    </citation>
    <scope>NUCLEOTIDE SEQUENCE [LARGE SCALE GENOMIC DNA]</scope>
    <source>
        <strain>8401</strain>
    </source>
</reference>
<gene>
    <name evidence="1" type="primary">gshA</name>
    <name type="ordered locus">SFV_2816</name>
</gene>
<evidence type="ECO:0000255" key="1">
    <source>
        <dbReference type="HAMAP-Rule" id="MF_00578"/>
    </source>
</evidence>